<gene>
    <name type="primary">hrtA</name>
    <name type="ordered locus">SERP1951</name>
</gene>
<feature type="chain" id="PRO_0000270138" description="Putative hemin import ATP-binding protein HrtA">
    <location>
        <begin position="1"/>
        <end position="222"/>
    </location>
</feature>
<feature type="domain" description="ABC transporter" evidence="2">
    <location>
        <begin position="3"/>
        <end position="222"/>
    </location>
</feature>
<feature type="binding site" evidence="2">
    <location>
        <begin position="39"/>
        <end position="46"/>
    </location>
    <ligand>
        <name>ATP</name>
        <dbReference type="ChEBI" id="CHEBI:30616"/>
    </ligand>
</feature>
<organism>
    <name type="scientific">Staphylococcus epidermidis (strain ATCC 35984 / DSM 28319 / BCRC 17069 / CCUG 31568 / BM 3577 / RP62A)</name>
    <dbReference type="NCBI Taxonomy" id="176279"/>
    <lineage>
        <taxon>Bacteria</taxon>
        <taxon>Bacillati</taxon>
        <taxon>Bacillota</taxon>
        <taxon>Bacilli</taxon>
        <taxon>Bacillales</taxon>
        <taxon>Staphylococcaceae</taxon>
        <taxon>Staphylococcus</taxon>
    </lineage>
</organism>
<comment type="function">
    <text evidence="1">Part of the ABC transporter complex hrt involved in hemin import. Responsible for energy coupling to the transport system (By similarity).</text>
</comment>
<comment type="subunit">
    <text evidence="1">The complex is composed of two ATP-binding proteins (HrtA), two transmembrane proteins (HrtB) and a solute-binding protein.</text>
</comment>
<comment type="subcellular location">
    <subcellularLocation>
        <location evidence="3">Cell membrane</location>
        <topology evidence="3">Peripheral membrane protein</topology>
    </subcellularLocation>
</comment>
<comment type="similarity">
    <text evidence="3">Belongs to the ABC transporter superfamily. HrtA family.</text>
</comment>
<protein>
    <recommendedName>
        <fullName>Putative hemin import ATP-binding protein HrtA</fullName>
        <ecNumber>7.6.2.-</ecNumber>
    </recommendedName>
</protein>
<dbReference type="EC" id="7.6.2.-"/>
<dbReference type="EMBL" id="CP000029">
    <property type="protein sequence ID" value="AAW52833.1"/>
    <property type="molecule type" value="Genomic_DNA"/>
</dbReference>
<dbReference type="RefSeq" id="WP_001831526.1">
    <property type="nucleotide sequence ID" value="NC_002976.3"/>
</dbReference>
<dbReference type="SMR" id="Q5HLN4"/>
<dbReference type="STRING" id="176279.SERP1951"/>
<dbReference type="KEGG" id="ser:SERP1951"/>
<dbReference type="eggNOG" id="COG1136">
    <property type="taxonomic scope" value="Bacteria"/>
</dbReference>
<dbReference type="HOGENOM" id="CLU_000604_1_22_9"/>
<dbReference type="Proteomes" id="UP000000531">
    <property type="component" value="Chromosome"/>
</dbReference>
<dbReference type="GO" id="GO:0005886">
    <property type="term" value="C:plasma membrane"/>
    <property type="evidence" value="ECO:0007669"/>
    <property type="project" value="UniProtKB-SubCell"/>
</dbReference>
<dbReference type="GO" id="GO:0005524">
    <property type="term" value="F:ATP binding"/>
    <property type="evidence" value="ECO:0007669"/>
    <property type="project" value="UniProtKB-KW"/>
</dbReference>
<dbReference type="GO" id="GO:0016887">
    <property type="term" value="F:ATP hydrolysis activity"/>
    <property type="evidence" value="ECO:0007669"/>
    <property type="project" value="InterPro"/>
</dbReference>
<dbReference type="GO" id="GO:0022857">
    <property type="term" value="F:transmembrane transporter activity"/>
    <property type="evidence" value="ECO:0007669"/>
    <property type="project" value="TreeGrafter"/>
</dbReference>
<dbReference type="CDD" id="cd03255">
    <property type="entry name" value="ABC_MJ0796_LolCDE_FtsE"/>
    <property type="match status" value="1"/>
</dbReference>
<dbReference type="FunFam" id="3.40.50.300:FF:000032">
    <property type="entry name" value="Export ABC transporter ATP-binding protein"/>
    <property type="match status" value="1"/>
</dbReference>
<dbReference type="Gene3D" id="3.40.50.300">
    <property type="entry name" value="P-loop containing nucleotide triphosphate hydrolases"/>
    <property type="match status" value="1"/>
</dbReference>
<dbReference type="InterPro" id="IPR003593">
    <property type="entry name" value="AAA+_ATPase"/>
</dbReference>
<dbReference type="InterPro" id="IPR003439">
    <property type="entry name" value="ABC_transporter-like_ATP-bd"/>
</dbReference>
<dbReference type="InterPro" id="IPR015854">
    <property type="entry name" value="ABC_transpr_LolD-like"/>
</dbReference>
<dbReference type="InterPro" id="IPR017911">
    <property type="entry name" value="MacB-like_ATP-bd"/>
</dbReference>
<dbReference type="InterPro" id="IPR027417">
    <property type="entry name" value="P-loop_NTPase"/>
</dbReference>
<dbReference type="PANTHER" id="PTHR24220:SF666">
    <property type="entry name" value="HEMIN IMPORT ATP-BINDING PROTEIN HRTA-RELATED"/>
    <property type="match status" value="1"/>
</dbReference>
<dbReference type="PANTHER" id="PTHR24220">
    <property type="entry name" value="IMPORT ATP-BINDING PROTEIN"/>
    <property type="match status" value="1"/>
</dbReference>
<dbReference type="Pfam" id="PF00005">
    <property type="entry name" value="ABC_tran"/>
    <property type="match status" value="1"/>
</dbReference>
<dbReference type="SMART" id="SM00382">
    <property type="entry name" value="AAA"/>
    <property type="match status" value="1"/>
</dbReference>
<dbReference type="SUPFAM" id="SSF52540">
    <property type="entry name" value="P-loop containing nucleoside triphosphate hydrolases"/>
    <property type="match status" value="1"/>
</dbReference>
<dbReference type="PROSITE" id="PS50893">
    <property type="entry name" value="ABC_TRANSPORTER_2"/>
    <property type="match status" value="1"/>
</dbReference>
<reference key="1">
    <citation type="journal article" date="2005" name="J. Bacteriol.">
        <title>Insights on evolution of virulence and resistance from the complete genome analysis of an early methicillin-resistant Staphylococcus aureus strain and a biofilm-producing methicillin-resistant Staphylococcus epidermidis strain.</title>
        <authorList>
            <person name="Gill S.R."/>
            <person name="Fouts D.E."/>
            <person name="Archer G.L."/>
            <person name="Mongodin E.F."/>
            <person name="DeBoy R.T."/>
            <person name="Ravel J."/>
            <person name="Paulsen I.T."/>
            <person name="Kolonay J.F."/>
            <person name="Brinkac L.M."/>
            <person name="Beanan M.J."/>
            <person name="Dodson R.J."/>
            <person name="Daugherty S.C."/>
            <person name="Madupu R."/>
            <person name="Angiuoli S.V."/>
            <person name="Durkin A.S."/>
            <person name="Haft D.H."/>
            <person name="Vamathevan J.J."/>
            <person name="Khouri H."/>
            <person name="Utterback T.R."/>
            <person name="Lee C."/>
            <person name="Dimitrov G."/>
            <person name="Jiang L."/>
            <person name="Qin H."/>
            <person name="Weidman J."/>
            <person name="Tran K."/>
            <person name="Kang K.H."/>
            <person name="Hance I.R."/>
            <person name="Nelson K.E."/>
            <person name="Fraser C.M."/>
        </authorList>
    </citation>
    <scope>NUCLEOTIDE SEQUENCE [LARGE SCALE GENOMIC DNA]</scope>
    <source>
        <strain>ATCC 35984 / DSM 28319 / BCRC 17069 / CCUG 31568 / BM 3577 / RP62A</strain>
    </source>
</reference>
<keyword id="KW-0067">ATP-binding</keyword>
<keyword id="KW-1003">Cell membrane</keyword>
<keyword id="KW-0472">Membrane</keyword>
<keyword id="KW-0547">Nucleotide-binding</keyword>
<keyword id="KW-1185">Reference proteome</keyword>
<keyword id="KW-1278">Translocase</keyword>
<keyword id="KW-0813">Transport</keyword>
<name>HRTA_STAEQ</name>
<proteinExistence type="inferred from homology"/>
<sequence>MGLVVKDISKTFGEKTSKTEVLKDINFEVKDGEFIILNGASGSGKTTLLTILGGLLSQTSGDVVYEGKSLFERHTNKAHLRLNDIGFIFQASHLVPYLKVLDQLTLIGKETGMSSKEAQARAKELLTKIGLEEQLNSYPHMLSGGQQQRVAIMRALMNHPKIVLADEPTASLDASRAQEVVEMIRKQIKANQMIGIMITHDESLFKYADRIVQLYDGKIKNS</sequence>
<accession>Q5HLN4</accession>
<evidence type="ECO:0000250" key="1"/>
<evidence type="ECO:0000255" key="2">
    <source>
        <dbReference type="PROSITE-ProRule" id="PRU00434"/>
    </source>
</evidence>
<evidence type="ECO:0000305" key="3"/>